<protein>
    <recommendedName>
        <fullName>Phosphatidate cytidylyltransferase</fullName>
        <ecNumber>2.7.7.41</ecNumber>
    </recommendedName>
    <alternativeName>
        <fullName>CDP-DAG synthase</fullName>
    </alternativeName>
    <alternativeName>
        <fullName>CDP-DG synthase</fullName>
    </alternativeName>
    <alternativeName>
        <fullName>CDP-diacylglycerol synthase</fullName>
        <shortName>CDS</shortName>
    </alternativeName>
    <alternativeName>
        <fullName>CDP-diglyceride pyrophosphorylase</fullName>
    </alternativeName>
    <alternativeName>
        <fullName>CDP-diglyceride synthase</fullName>
    </alternativeName>
    <alternativeName>
        <fullName>CTP:phosphatidate cytidylyltransferase</fullName>
    </alternativeName>
</protein>
<dbReference type="EC" id="2.7.7.41"/>
<dbReference type="EMBL" id="AE000516">
    <property type="protein sequence ID" value="AAK47273.1"/>
    <property type="status" value="ALT_INIT"/>
    <property type="molecule type" value="Genomic_DNA"/>
</dbReference>
<dbReference type="PIR" id="D70924">
    <property type="entry name" value="D70924"/>
</dbReference>
<dbReference type="SMR" id="P9WPF6"/>
<dbReference type="KEGG" id="mtc:MT2948"/>
<dbReference type="HOGENOM" id="CLU_037294_0_0_11"/>
<dbReference type="UniPathway" id="UPA00557">
    <property type="reaction ID" value="UER00614"/>
</dbReference>
<dbReference type="Proteomes" id="UP000001020">
    <property type="component" value="Chromosome"/>
</dbReference>
<dbReference type="GO" id="GO:0005886">
    <property type="term" value="C:plasma membrane"/>
    <property type="evidence" value="ECO:0007669"/>
    <property type="project" value="UniProtKB-SubCell"/>
</dbReference>
<dbReference type="GO" id="GO:0004605">
    <property type="term" value="F:phosphatidate cytidylyltransferase activity"/>
    <property type="evidence" value="ECO:0007669"/>
    <property type="project" value="UniProtKB-EC"/>
</dbReference>
<dbReference type="GO" id="GO:0016024">
    <property type="term" value="P:CDP-diacylglycerol biosynthetic process"/>
    <property type="evidence" value="ECO:0007669"/>
    <property type="project" value="UniProtKB-UniPathway"/>
</dbReference>
<dbReference type="InterPro" id="IPR000374">
    <property type="entry name" value="PC_trans"/>
</dbReference>
<dbReference type="PANTHER" id="PTHR46382">
    <property type="entry name" value="PHOSPHATIDATE CYTIDYLYLTRANSFERASE"/>
    <property type="match status" value="1"/>
</dbReference>
<dbReference type="PANTHER" id="PTHR46382:SF1">
    <property type="entry name" value="PHOSPHATIDATE CYTIDYLYLTRANSFERASE"/>
    <property type="match status" value="1"/>
</dbReference>
<dbReference type="Pfam" id="PF01148">
    <property type="entry name" value="CTP_transf_1"/>
    <property type="match status" value="1"/>
</dbReference>
<dbReference type="PROSITE" id="PS01315">
    <property type="entry name" value="CDS"/>
    <property type="match status" value="1"/>
</dbReference>
<reference key="1">
    <citation type="journal article" date="2002" name="J. Bacteriol.">
        <title>Whole-genome comparison of Mycobacterium tuberculosis clinical and laboratory strains.</title>
        <authorList>
            <person name="Fleischmann R.D."/>
            <person name="Alland D."/>
            <person name="Eisen J.A."/>
            <person name="Carpenter L."/>
            <person name="White O."/>
            <person name="Peterson J.D."/>
            <person name="DeBoy R.T."/>
            <person name="Dodson R.J."/>
            <person name="Gwinn M.L."/>
            <person name="Haft D.H."/>
            <person name="Hickey E.K."/>
            <person name="Kolonay J.F."/>
            <person name="Nelson W.C."/>
            <person name="Umayam L.A."/>
            <person name="Ermolaeva M.D."/>
            <person name="Salzberg S.L."/>
            <person name="Delcher A."/>
            <person name="Utterback T.R."/>
            <person name="Weidman J.F."/>
            <person name="Khouri H.M."/>
            <person name="Gill J."/>
            <person name="Mikula A."/>
            <person name="Bishai W."/>
            <person name="Jacobs W.R. Jr."/>
            <person name="Venter J.C."/>
            <person name="Fraser C.M."/>
        </authorList>
    </citation>
    <scope>NUCLEOTIDE SEQUENCE [LARGE SCALE GENOMIC DNA]</scope>
    <source>
        <strain>CDC 1551 / Oshkosh</strain>
    </source>
</reference>
<sequence>MSWLNTKKASCWRSSGRSATKSVTTNDAGTGNPAEQPARGAKQQPATETSRAGRDLRAAIVVGLSIGLVLIAVLVFVPRVWVAIVAVATLVATHEVVRRLREAGYLIPVIPLLIGGQAAVWLTWPFGAVGALAGFGGMVVVCMIWRLFMQDSVTRPTTGGAPSPGNYLSDVSATVFLAVWVPLFCSFGAMLVYPENGSGWVFCMMIAVIASDVGGYAVGVLFGKHPMVPTISPKKSWEGFAGSLVCGITATIITATFLVGKTPWIGALLGVLFVLTTALGDLVESQVKRDLGIKDMGRLLPGHGGLMDRLDGILPSAVAAWIVLTLLP</sequence>
<gene>
    <name type="primary">cdsA</name>
    <name type="ordered locus">MT2948</name>
</gene>
<name>CDSA_MYCTO</name>
<comment type="catalytic activity">
    <reaction>
        <text>a 1,2-diacyl-sn-glycero-3-phosphate + CTP + H(+) = a CDP-1,2-diacyl-sn-glycerol + diphosphate</text>
        <dbReference type="Rhea" id="RHEA:16229"/>
        <dbReference type="ChEBI" id="CHEBI:15378"/>
        <dbReference type="ChEBI" id="CHEBI:33019"/>
        <dbReference type="ChEBI" id="CHEBI:37563"/>
        <dbReference type="ChEBI" id="CHEBI:58332"/>
        <dbReference type="ChEBI" id="CHEBI:58608"/>
        <dbReference type="EC" id="2.7.7.41"/>
    </reaction>
</comment>
<comment type="pathway">
    <text>Phospholipid metabolism; CDP-diacylglycerol biosynthesis; CDP-diacylglycerol from sn-glycerol 3-phosphate: step 3/3.</text>
</comment>
<comment type="subcellular location">
    <subcellularLocation>
        <location evidence="1">Cell membrane</location>
        <topology evidence="1">Multi-pass membrane protein</topology>
    </subcellularLocation>
</comment>
<comment type="similarity">
    <text evidence="3">Belongs to the CDS family.</text>
</comment>
<comment type="sequence caution" evidence="3">
    <conflict type="erroneous initiation">
        <sequence resource="EMBL-CDS" id="AAK47273"/>
    </conflict>
    <text>Extended N-terminus.</text>
</comment>
<keyword id="KW-1003">Cell membrane</keyword>
<keyword id="KW-0444">Lipid biosynthesis</keyword>
<keyword id="KW-0443">Lipid metabolism</keyword>
<keyword id="KW-0472">Membrane</keyword>
<keyword id="KW-0548">Nucleotidyltransferase</keyword>
<keyword id="KW-0594">Phospholipid biosynthesis</keyword>
<keyword id="KW-1208">Phospholipid metabolism</keyword>
<keyword id="KW-1185">Reference proteome</keyword>
<keyword id="KW-0808">Transferase</keyword>
<keyword id="KW-0812">Transmembrane</keyword>
<keyword id="KW-1133">Transmembrane helix</keyword>
<proteinExistence type="inferred from homology"/>
<accession>P9WPF6</accession>
<accession>L0TDN0</accession>
<accession>P63758</accession>
<accession>Q10807</accession>
<organism>
    <name type="scientific">Mycobacterium tuberculosis (strain CDC 1551 / Oshkosh)</name>
    <dbReference type="NCBI Taxonomy" id="83331"/>
    <lineage>
        <taxon>Bacteria</taxon>
        <taxon>Bacillati</taxon>
        <taxon>Actinomycetota</taxon>
        <taxon>Actinomycetes</taxon>
        <taxon>Mycobacteriales</taxon>
        <taxon>Mycobacteriaceae</taxon>
        <taxon>Mycobacterium</taxon>
        <taxon>Mycobacterium tuberculosis complex</taxon>
    </lineage>
</organism>
<evidence type="ECO:0000255" key="1"/>
<evidence type="ECO:0000256" key="2">
    <source>
        <dbReference type="SAM" id="MobiDB-lite"/>
    </source>
</evidence>
<evidence type="ECO:0000305" key="3"/>
<feature type="chain" id="PRO_0000426960" description="Phosphatidate cytidylyltransferase">
    <location>
        <begin position="1"/>
        <end position="328"/>
    </location>
</feature>
<feature type="transmembrane region" description="Helical" evidence="1">
    <location>
        <begin position="58"/>
        <end position="78"/>
    </location>
</feature>
<feature type="transmembrane region" description="Helical" evidence="1">
    <location>
        <begin position="103"/>
        <end position="123"/>
    </location>
</feature>
<feature type="transmembrane region" description="Helical" evidence="1">
    <location>
        <begin position="124"/>
        <end position="144"/>
    </location>
</feature>
<feature type="transmembrane region" description="Helical" evidence="1">
    <location>
        <begin position="173"/>
        <end position="193"/>
    </location>
</feature>
<feature type="transmembrane region" description="Helical" evidence="1">
    <location>
        <begin position="202"/>
        <end position="222"/>
    </location>
</feature>
<feature type="transmembrane region" description="Helical" evidence="1">
    <location>
        <begin position="239"/>
        <end position="259"/>
    </location>
</feature>
<feature type="transmembrane region" description="Helical" evidence="1">
    <location>
        <begin position="263"/>
        <end position="283"/>
    </location>
</feature>
<feature type="region of interest" description="Disordered" evidence="2">
    <location>
        <begin position="15"/>
        <end position="50"/>
    </location>
</feature>
<feature type="compositionally biased region" description="Polar residues" evidence="2">
    <location>
        <begin position="15"/>
        <end position="29"/>
    </location>
</feature>